<name>DBP9_COCIM</name>
<feature type="chain" id="PRO_0000256050" description="ATP-dependent RNA helicase DBP9">
    <location>
        <begin position="1"/>
        <end position="612"/>
    </location>
</feature>
<feature type="domain" description="Helicase ATP-binding" evidence="2">
    <location>
        <begin position="54"/>
        <end position="232"/>
    </location>
</feature>
<feature type="domain" description="Helicase C-terminal" evidence="3">
    <location>
        <begin position="243"/>
        <end position="479"/>
    </location>
</feature>
<feature type="region of interest" description="Disordered" evidence="4">
    <location>
        <begin position="335"/>
        <end position="383"/>
    </location>
</feature>
<feature type="region of interest" description="Disordered" evidence="4">
    <location>
        <begin position="576"/>
        <end position="612"/>
    </location>
</feature>
<feature type="short sequence motif" description="Q motif">
    <location>
        <begin position="23"/>
        <end position="51"/>
    </location>
</feature>
<feature type="short sequence motif" description="DEAD box">
    <location>
        <begin position="180"/>
        <end position="183"/>
    </location>
</feature>
<feature type="compositionally biased region" description="Acidic residues" evidence="4">
    <location>
        <begin position="351"/>
        <end position="368"/>
    </location>
</feature>
<feature type="compositionally biased region" description="Basic residues" evidence="4">
    <location>
        <begin position="579"/>
        <end position="600"/>
    </location>
</feature>
<feature type="compositionally biased region" description="Basic and acidic residues" evidence="4">
    <location>
        <begin position="601"/>
        <end position="612"/>
    </location>
</feature>
<feature type="binding site" evidence="2">
    <location>
        <begin position="67"/>
        <end position="74"/>
    </location>
    <ligand>
        <name>ATP</name>
        <dbReference type="ChEBI" id="CHEBI:30616"/>
    </ligand>
</feature>
<sequence length="612" mass="67977">MKRKLDENNVPTPENSGPKALEKTFETLHLDPRLLQALTKQKFTKPTLVQAEAIPLVLSGKDVLARAKTGSGKTAAYLLPILQSILQKKIANPTQKSISALILVPTRELAEQVQNAVVSFSSFCGKDIRSANLTQKVSDAVQRAILADLPDIIISTPARAIINTNSSSLSLNDLTHLVIDEADLVLSYGYEQDMQNLAKAIPRGVQTLLMSATLTSEVDALKGLFCRSPVILKLEEAEDEGAGIAQFAVKCAEDEKFLLTYVIFKLQLVKGKCIIFVGDIDRSYRLKLFLEQFGIKSCVLNSELPVNSRIHVVQEFNKGVYDIIIAADDQEVIGEIPKKGSKTPEQSNGENGDEPEEEKGFSDEDEVEPPPSKKRKKSTKEKDYGISRGIDFQDVACVLNFDLPTTAKSYTHRIGRTGRAGKTGMALSLIVPSELYGRHKPTSFPTAKNDEAVLAKIIKRQAKLGREVKPYNFDTKQIDAFRYRMTDALRAVTRVAVQEARTKEIKQELLNSEKLKRHFEENPEELRQLRHDGELRPTRVQAHLKHVPEYLMPAKGKAGLTSGDIGFVGLRKTNENRIRKARDRNRMRGKGGRKGGRGGGRKADPLKTFKSK</sequence>
<reference key="1">
    <citation type="journal article" date="2009" name="Genome Res.">
        <title>Comparative genomic analyses of the human fungal pathogens Coccidioides and their relatives.</title>
        <authorList>
            <person name="Sharpton T.J."/>
            <person name="Stajich J.E."/>
            <person name="Rounsley S.D."/>
            <person name="Gardner M.J."/>
            <person name="Wortman J.R."/>
            <person name="Jordar V.S."/>
            <person name="Maiti R."/>
            <person name="Kodira C.D."/>
            <person name="Neafsey D.E."/>
            <person name="Zeng Q."/>
            <person name="Hung C.-Y."/>
            <person name="McMahan C."/>
            <person name="Muszewska A."/>
            <person name="Grynberg M."/>
            <person name="Mandel M.A."/>
            <person name="Kellner E.M."/>
            <person name="Barker B.M."/>
            <person name="Galgiani J.N."/>
            <person name="Orbach M.J."/>
            <person name="Kirkland T.N."/>
            <person name="Cole G.T."/>
            <person name="Henn M.R."/>
            <person name="Birren B.W."/>
            <person name="Taylor J.W."/>
        </authorList>
    </citation>
    <scope>NUCLEOTIDE SEQUENCE [LARGE SCALE GENOMIC DNA]</scope>
    <source>
        <strain>RS</strain>
    </source>
</reference>
<reference key="2">
    <citation type="journal article" date="2010" name="Genome Res.">
        <title>Population genomic sequencing of Coccidioides fungi reveals recent hybridization and transposon control.</title>
        <authorList>
            <person name="Neafsey D.E."/>
            <person name="Barker B.M."/>
            <person name="Sharpton T.J."/>
            <person name="Stajich J.E."/>
            <person name="Park D.J."/>
            <person name="Whiston E."/>
            <person name="Hung C.-Y."/>
            <person name="McMahan C."/>
            <person name="White J."/>
            <person name="Sykes S."/>
            <person name="Heiman D."/>
            <person name="Young S."/>
            <person name="Zeng Q."/>
            <person name="Abouelleil A."/>
            <person name="Aftuck L."/>
            <person name="Bessette D."/>
            <person name="Brown A."/>
            <person name="FitzGerald M."/>
            <person name="Lui A."/>
            <person name="Macdonald J.P."/>
            <person name="Priest M."/>
            <person name="Orbach M.J."/>
            <person name="Galgiani J.N."/>
            <person name="Kirkland T.N."/>
            <person name="Cole G.T."/>
            <person name="Birren B.W."/>
            <person name="Henn M.R."/>
            <person name="Taylor J.W."/>
            <person name="Rounsley S.D."/>
        </authorList>
    </citation>
    <scope>GENOME REANNOTATION</scope>
    <source>
        <strain>RS</strain>
    </source>
</reference>
<evidence type="ECO:0000250" key="1"/>
<evidence type="ECO:0000255" key="2">
    <source>
        <dbReference type="PROSITE-ProRule" id="PRU00541"/>
    </source>
</evidence>
<evidence type="ECO:0000255" key="3">
    <source>
        <dbReference type="PROSITE-ProRule" id="PRU00542"/>
    </source>
</evidence>
<evidence type="ECO:0000256" key="4">
    <source>
        <dbReference type="SAM" id="MobiDB-lite"/>
    </source>
</evidence>
<evidence type="ECO:0000305" key="5"/>
<organism>
    <name type="scientific">Coccidioides immitis (strain RS)</name>
    <name type="common">Valley fever fungus</name>
    <dbReference type="NCBI Taxonomy" id="246410"/>
    <lineage>
        <taxon>Eukaryota</taxon>
        <taxon>Fungi</taxon>
        <taxon>Dikarya</taxon>
        <taxon>Ascomycota</taxon>
        <taxon>Pezizomycotina</taxon>
        <taxon>Eurotiomycetes</taxon>
        <taxon>Eurotiomycetidae</taxon>
        <taxon>Onygenales</taxon>
        <taxon>Onygenaceae</taxon>
        <taxon>Coccidioides</taxon>
    </lineage>
</organism>
<proteinExistence type="inferred from homology"/>
<gene>
    <name type="primary">DBP9</name>
    <name type="ORF">CIMG_05359</name>
</gene>
<comment type="function">
    <text evidence="1">ATP-binding RNA helicase involved in the biogenesis of 60S ribosomal subunits and is required for the normal formation of 25S and 5.8S rRNAs.</text>
</comment>
<comment type="catalytic activity">
    <reaction>
        <text>ATP + H2O = ADP + phosphate + H(+)</text>
        <dbReference type="Rhea" id="RHEA:13065"/>
        <dbReference type="ChEBI" id="CHEBI:15377"/>
        <dbReference type="ChEBI" id="CHEBI:15378"/>
        <dbReference type="ChEBI" id="CHEBI:30616"/>
        <dbReference type="ChEBI" id="CHEBI:43474"/>
        <dbReference type="ChEBI" id="CHEBI:456216"/>
        <dbReference type="EC" id="3.6.4.13"/>
    </reaction>
</comment>
<comment type="subcellular location">
    <subcellularLocation>
        <location evidence="1">Nucleus</location>
        <location evidence="1">Nucleolus</location>
    </subcellularLocation>
</comment>
<comment type="domain">
    <text>The Q motif is unique to and characteristic of the DEAD box family of RNA helicases and controls ATP binding and hydrolysis.</text>
</comment>
<comment type="similarity">
    <text evidence="5">Belongs to the DEAD box helicase family. DDX56/DBP9 subfamily.</text>
</comment>
<protein>
    <recommendedName>
        <fullName>ATP-dependent RNA helicase DBP9</fullName>
        <ecNumber>3.6.4.13</ecNumber>
    </recommendedName>
</protein>
<dbReference type="EC" id="3.6.4.13"/>
<dbReference type="EMBL" id="GG704914">
    <property type="protein sequence ID" value="EAS34335.3"/>
    <property type="molecule type" value="Genomic_DNA"/>
</dbReference>
<dbReference type="RefSeq" id="XP_001245918.2">
    <property type="nucleotide sequence ID" value="XM_001245917.2"/>
</dbReference>
<dbReference type="SMR" id="Q1DWF4"/>
<dbReference type="FunCoup" id="Q1DWF4">
    <property type="interactions" value="950"/>
</dbReference>
<dbReference type="STRING" id="246410.Q1DWF4"/>
<dbReference type="GeneID" id="4563720"/>
<dbReference type="KEGG" id="cim:CIMG_05359"/>
<dbReference type="VEuPathDB" id="FungiDB:CIMG_05359"/>
<dbReference type="InParanoid" id="Q1DWF4"/>
<dbReference type="OMA" id="NASEQCV"/>
<dbReference type="OrthoDB" id="1191041at2759"/>
<dbReference type="Proteomes" id="UP000001261">
    <property type="component" value="Unassembled WGS sequence"/>
</dbReference>
<dbReference type="GO" id="GO:0005829">
    <property type="term" value="C:cytosol"/>
    <property type="evidence" value="ECO:0007669"/>
    <property type="project" value="TreeGrafter"/>
</dbReference>
<dbReference type="GO" id="GO:0005730">
    <property type="term" value="C:nucleolus"/>
    <property type="evidence" value="ECO:0007669"/>
    <property type="project" value="UniProtKB-SubCell"/>
</dbReference>
<dbReference type="GO" id="GO:0005524">
    <property type="term" value="F:ATP binding"/>
    <property type="evidence" value="ECO:0007669"/>
    <property type="project" value="UniProtKB-KW"/>
</dbReference>
<dbReference type="GO" id="GO:0016887">
    <property type="term" value="F:ATP hydrolysis activity"/>
    <property type="evidence" value="ECO:0007669"/>
    <property type="project" value="RHEA"/>
</dbReference>
<dbReference type="GO" id="GO:0003723">
    <property type="term" value="F:RNA binding"/>
    <property type="evidence" value="ECO:0007669"/>
    <property type="project" value="UniProtKB-KW"/>
</dbReference>
<dbReference type="GO" id="GO:0003724">
    <property type="term" value="F:RNA helicase activity"/>
    <property type="evidence" value="ECO:0007669"/>
    <property type="project" value="UniProtKB-EC"/>
</dbReference>
<dbReference type="GO" id="GO:0006364">
    <property type="term" value="P:rRNA processing"/>
    <property type="evidence" value="ECO:0007669"/>
    <property type="project" value="UniProtKB-KW"/>
</dbReference>
<dbReference type="CDD" id="cd17961">
    <property type="entry name" value="DEADc_DDX56"/>
    <property type="match status" value="1"/>
</dbReference>
<dbReference type="CDD" id="cd18787">
    <property type="entry name" value="SF2_C_DEAD"/>
    <property type="match status" value="1"/>
</dbReference>
<dbReference type="Gene3D" id="3.40.50.300">
    <property type="entry name" value="P-loop containing nucleotide triphosphate hydrolases"/>
    <property type="match status" value="2"/>
</dbReference>
<dbReference type="InterPro" id="IPR011545">
    <property type="entry name" value="DEAD/DEAH_box_helicase_dom"/>
</dbReference>
<dbReference type="InterPro" id="IPR050079">
    <property type="entry name" value="DEAD_box_RNA_helicase"/>
</dbReference>
<dbReference type="InterPro" id="IPR014001">
    <property type="entry name" value="Helicase_ATP-bd"/>
</dbReference>
<dbReference type="InterPro" id="IPR001650">
    <property type="entry name" value="Helicase_C-like"/>
</dbReference>
<dbReference type="InterPro" id="IPR027417">
    <property type="entry name" value="P-loop_NTPase"/>
</dbReference>
<dbReference type="InterPro" id="IPR014014">
    <property type="entry name" value="RNA_helicase_DEAD_Q_motif"/>
</dbReference>
<dbReference type="PANTHER" id="PTHR47959">
    <property type="entry name" value="ATP-DEPENDENT RNA HELICASE RHLE-RELATED"/>
    <property type="match status" value="1"/>
</dbReference>
<dbReference type="PANTHER" id="PTHR47959:SF21">
    <property type="entry name" value="DEAD-BOX HELICASE 56"/>
    <property type="match status" value="1"/>
</dbReference>
<dbReference type="Pfam" id="PF00270">
    <property type="entry name" value="DEAD"/>
    <property type="match status" value="1"/>
</dbReference>
<dbReference type="Pfam" id="PF00271">
    <property type="entry name" value="Helicase_C"/>
    <property type="match status" value="2"/>
</dbReference>
<dbReference type="SMART" id="SM00487">
    <property type="entry name" value="DEXDc"/>
    <property type="match status" value="1"/>
</dbReference>
<dbReference type="SMART" id="SM00490">
    <property type="entry name" value="HELICc"/>
    <property type="match status" value="1"/>
</dbReference>
<dbReference type="SUPFAM" id="SSF52540">
    <property type="entry name" value="P-loop containing nucleoside triphosphate hydrolases"/>
    <property type="match status" value="2"/>
</dbReference>
<dbReference type="PROSITE" id="PS51192">
    <property type="entry name" value="HELICASE_ATP_BIND_1"/>
    <property type="match status" value="1"/>
</dbReference>
<dbReference type="PROSITE" id="PS51194">
    <property type="entry name" value="HELICASE_CTER"/>
    <property type="match status" value="1"/>
</dbReference>
<dbReference type="PROSITE" id="PS51195">
    <property type="entry name" value="Q_MOTIF"/>
    <property type="match status" value="1"/>
</dbReference>
<keyword id="KW-0067">ATP-binding</keyword>
<keyword id="KW-0347">Helicase</keyword>
<keyword id="KW-0378">Hydrolase</keyword>
<keyword id="KW-0547">Nucleotide-binding</keyword>
<keyword id="KW-0539">Nucleus</keyword>
<keyword id="KW-1185">Reference proteome</keyword>
<keyword id="KW-0690">Ribosome biogenesis</keyword>
<keyword id="KW-0694">RNA-binding</keyword>
<keyword id="KW-0698">rRNA processing</keyword>
<accession>Q1DWF4</accession>
<accession>J3KFV6</accession>